<keyword id="KW-0025">Alternative splicing</keyword>
<keyword id="KW-1185">Reference proteome</keyword>
<keyword id="KW-0833">Ubl conjugation pathway</keyword>
<comment type="function">
    <text evidence="2">Acts as a target recruitment subunit in the E3 ubiquitin ligase complex zer-1-cul-2-elc-1.</text>
</comment>
<comment type="subunit">
    <text evidence="2">Interacts with elc-1. Part of an E3 ubiquitin ligase complex including zer-11, cul-2 and elc-1.</text>
</comment>
<comment type="interaction">
    <interactant intactId="EBI-1811352">
        <id>Q2WF59</id>
    </interactant>
    <interactant intactId="EBI-1811231">
        <id>Q17390</id>
        <label>cul-2</label>
    </interactant>
    <organismsDiffer>false</organismsDiffer>
    <experiments>2</experiments>
</comment>
<comment type="alternative products">
    <event type="alternative splicing"/>
    <isoform>
        <id>Q2WF59-1</id>
        <name>b</name>
        <sequence type="displayed"/>
    </isoform>
    <isoform>
        <id>Q2WF59-2</id>
        <name>a</name>
        <sequence type="described" ref="VSP_028229"/>
    </isoform>
</comment>
<sequence>MSHTADIPLEAPTLLKLASSSVQSQINNDEYMETVILPVPLSQELFARFRNKWNIHNHGPAPVEHLGPPTDEPRPDQGNIDMIKQVFRIWSDSTRLPLEKLNLTGATVDDQIFVDLLHAHAHSITELDLTNVTGVTDLSNAYLYARSTHFPMLTSIRMTSMDLVTGHQPRRKNGIASTEFRALFMLGEEALAEARGQMERDGLRSPLSPSSQPSSIQSDHQSLDALVPCDSPVEPPLITARAPNVKRLFLPRCPAKRTTIDEEEQNTHVILTKILSPLQQLEVLDLSYWSKTDDMRCLQPLSNTLTCLILYDVPDLYHAVPNICHMTELRILDVSQSNRDSGLYPHPVTTLNKLIVSLKYLTHLDISSTNLATQPSSHDNPARYRESVRTDICGLQSLVRPLKYLGLFNCESASHVREIPAEVVSGDANEDQVITSLQMYKDRAGLLQNVLNESYQLYRFGNSNPLTRHTEALHLVLEAMHRHLADSTLQIAGSASLFYIIRKVDMNRDTKRRVVSALLSGMEVHMEEQVMVRNCCLSLCQFEIPQDILFDYSRLAVLLVSVLQHHNADNLTQRIVVFLLNSMACHVEGDQKVQVGSYGAIEMILDQIARKHTANVCDDVMEVGWSFLWNITDETPVNCELFLNANGLDLFQKCYEAFKTERELVRNMMGLIGNIAEVDELRSQLMKDDYVKIFCALLESQEESIEISYNSAGVLAHMVSDGEEVWKQMTVCRNEVMQRIVEATSSWKLATRRFINYRSFRPILRLLPLYHAYASQHWAVWALANLTTTDGEKYCAYVRDEGGVPLLEELVSNAITTTDIRTLANTVLENIRNVENKRNPKSIPADLAHSSNSPTFVPSYVSDVEEEDEGDVEADEEVQDFVNVDFDDYALPMEY</sequence>
<proteinExistence type="evidence at protein level"/>
<protein>
    <recommendedName>
        <fullName>Zyg eleven-related protein 1</fullName>
    </recommendedName>
    <alternativeName>
        <fullName>zyg-11-related protein</fullName>
    </alternativeName>
</protein>
<feature type="chain" id="PRO_0000305091" description="Zyg eleven-related protein 1">
    <location>
        <begin position="1"/>
        <end position="895"/>
    </location>
</feature>
<feature type="region of interest" description="Disordered" evidence="1">
    <location>
        <begin position="58"/>
        <end position="78"/>
    </location>
</feature>
<feature type="region of interest" description="Disordered" evidence="1">
    <location>
        <begin position="195"/>
        <end position="221"/>
    </location>
</feature>
<feature type="compositionally biased region" description="Low complexity" evidence="1">
    <location>
        <begin position="205"/>
        <end position="220"/>
    </location>
</feature>
<feature type="splice variant" id="VSP_028229" description="In isoform a." evidence="3">
    <original>RNPKSIPADLAHSSNSPTFVPSYVSDVEEEDEGDVEADEEVQDFVNVDFDDYALPMEY</original>
    <variation>ARKAAIRPQKRSRDPADDGDDEY</variation>
    <location>
        <begin position="838"/>
        <end position="895"/>
    </location>
</feature>
<organism>
    <name type="scientific">Caenorhabditis elegans</name>
    <dbReference type="NCBI Taxonomy" id="6239"/>
    <lineage>
        <taxon>Eukaryota</taxon>
        <taxon>Metazoa</taxon>
        <taxon>Ecdysozoa</taxon>
        <taxon>Nematoda</taxon>
        <taxon>Chromadorea</taxon>
        <taxon>Rhabditida</taxon>
        <taxon>Rhabditina</taxon>
        <taxon>Rhabditomorpha</taxon>
        <taxon>Rhabditoidea</taxon>
        <taxon>Rhabditidae</taxon>
        <taxon>Peloderinae</taxon>
        <taxon>Caenorhabditis</taxon>
    </lineage>
</organism>
<evidence type="ECO:0000256" key="1">
    <source>
        <dbReference type="SAM" id="MobiDB-lite"/>
    </source>
</evidence>
<evidence type="ECO:0000269" key="2">
    <source>
    </source>
</evidence>
<evidence type="ECO:0000305" key="3"/>
<accession>Q2WF59</accession>
<accession>Q2WF58</accession>
<gene>
    <name type="primary">zer-1</name>
    <name type="ORF">T24C4.6</name>
</gene>
<reference key="1">
    <citation type="journal article" date="1998" name="Science">
        <title>Genome sequence of the nematode C. elegans: a platform for investigating biology.</title>
        <authorList>
            <consortium name="The C. elegans sequencing consortium"/>
        </authorList>
    </citation>
    <scope>NUCLEOTIDE SEQUENCE [LARGE SCALE GENOMIC DNA]</scope>
    <scope>ALTERNATIVE SPLICING</scope>
    <source>
        <strain>Bristol N2</strain>
    </source>
</reference>
<reference key="2">
    <citation type="journal article" date="2007" name="EMBO Rep.">
        <title>The Caenorhabditis elegans cell-cycle regulator ZYG-11 defines a conserved family of CUL-2 complex components.</title>
        <authorList>
            <person name="Vasudevan S."/>
            <person name="Starostina N.G."/>
            <person name="Kipreos E.T."/>
        </authorList>
    </citation>
    <scope>FUNCTION</scope>
    <scope>INTERACTION WITH ELC-1</scope>
    <scope>IDENTIFICATION IN COMPLEX WITH CUL-2 AND ELC-1</scope>
    <scope>IDENTIFICATION BY MASS SPECTROMETRY</scope>
</reference>
<name>ZER1_CAEEL</name>
<dbReference type="EMBL" id="FO081214">
    <property type="protein sequence ID" value="CCD69960.1"/>
    <property type="molecule type" value="Genomic_DNA"/>
</dbReference>
<dbReference type="EMBL" id="FO081214">
    <property type="protein sequence ID" value="CCD69961.1"/>
    <property type="molecule type" value="Genomic_DNA"/>
</dbReference>
<dbReference type="RefSeq" id="NP_741089.2">
    <molecule id="Q2WF59-1"/>
    <property type="nucleotide sequence ID" value="NM_171078.7"/>
</dbReference>
<dbReference type="RefSeq" id="NP_741090.3">
    <molecule id="Q2WF59-2"/>
    <property type="nucleotide sequence ID" value="NM_171079.10"/>
</dbReference>
<dbReference type="SMR" id="Q2WF59"/>
<dbReference type="BioGRID" id="40518">
    <property type="interactions" value="3"/>
</dbReference>
<dbReference type="FunCoup" id="Q2WF59">
    <property type="interactions" value="2045"/>
</dbReference>
<dbReference type="IntAct" id="Q2WF59">
    <property type="interactions" value="2"/>
</dbReference>
<dbReference type="MINT" id="Q2WF59"/>
<dbReference type="STRING" id="6239.T24C4.6b.1"/>
<dbReference type="PaxDb" id="6239-T24C4.6b"/>
<dbReference type="PeptideAtlas" id="Q2WF59"/>
<dbReference type="EnsemblMetazoa" id="T24C4.6a.1">
    <molecule id="Q2WF59-2"/>
    <property type="protein sequence ID" value="T24C4.6a.1"/>
    <property type="gene ID" value="WBGene00020762"/>
</dbReference>
<dbReference type="EnsemblMetazoa" id="T24C4.6a.2">
    <molecule id="Q2WF59-2"/>
    <property type="protein sequence ID" value="T24C4.6a.2"/>
    <property type="gene ID" value="WBGene00020762"/>
</dbReference>
<dbReference type="EnsemblMetazoa" id="T24C4.6b.1">
    <molecule id="Q2WF59-1"/>
    <property type="protein sequence ID" value="T24C4.6b.1"/>
    <property type="gene ID" value="WBGene00020762"/>
</dbReference>
<dbReference type="GeneID" id="175249"/>
<dbReference type="KEGG" id="cel:CELE_T24C4.6"/>
<dbReference type="UCSC" id="T24C4.6a">
    <molecule id="Q2WF59-1"/>
    <property type="organism name" value="c. elegans"/>
</dbReference>
<dbReference type="AGR" id="WB:WBGene00020762"/>
<dbReference type="CTD" id="175249"/>
<dbReference type="WormBase" id="T24C4.6a">
    <molecule id="Q2WF59-2"/>
    <property type="protein sequence ID" value="CE39414"/>
    <property type="gene ID" value="WBGene00020762"/>
    <property type="gene designation" value="zer-1"/>
</dbReference>
<dbReference type="WormBase" id="T24C4.6b">
    <molecule id="Q2WF59-1"/>
    <property type="protein sequence ID" value="CE39415"/>
    <property type="gene ID" value="WBGene00020762"/>
    <property type="gene designation" value="zer-1"/>
</dbReference>
<dbReference type="eggNOG" id="KOG3665">
    <property type="taxonomic scope" value="Eukaryota"/>
</dbReference>
<dbReference type="GeneTree" id="ENSGT00530000063187"/>
<dbReference type="InParanoid" id="Q2WF59"/>
<dbReference type="OMA" id="GMEVHME"/>
<dbReference type="OrthoDB" id="5783533at2759"/>
<dbReference type="PhylomeDB" id="Q2WF59"/>
<dbReference type="PRO" id="PR:Q2WF59"/>
<dbReference type="Proteomes" id="UP000001940">
    <property type="component" value="Chromosome III"/>
</dbReference>
<dbReference type="Bgee" id="WBGene00020762">
    <property type="expression patterns" value="Expressed in embryo and 4 other cell types or tissues"/>
</dbReference>
<dbReference type="GO" id="GO:0031462">
    <property type="term" value="C:Cul2-RING ubiquitin ligase complex"/>
    <property type="evidence" value="ECO:0000314"/>
    <property type="project" value="UniProtKB"/>
</dbReference>
<dbReference type="FunFam" id="1.25.10.10:FF:000638">
    <property type="entry name" value="Zyg eleven-related protein 1"/>
    <property type="match status" value="1"/>
</dbReference>
<dbReference type="Gene3D" id="1.25.10.10">
    <property type="entry name" value="Leucine-rich Repeat Variant"/>
    <property type="match status" value="1"/>
</dbReference>
<dbReference type="Gene3D" id="3.80.10.10">
    <property type="entry name" value="Ribonuclease Inhibitor"/>
    <property type="match status" value="1"/>
</dbReference>
<dbReference type="InterPro" id="IPR011989">
    <property type="entry name" value="ARM-like"/>
</dbReference>
<dbReference type="InterPro" id="IPR016024">
    <property type="entry name" value="ARM-type_fold"/>
</dbReference>
<dbReference type="InterPro" id="IPR032675">
    <property type="entry name" value="LRR_dom_sf"/>
</dbReference>
<dbReference type="InterPro" id="IPR056845">
    <property type="entry name" value="LRR_Zer-1"/>
</dbReference>
<dbReference type="InterPro" id="IPR055142">
    <property type="entry name" value="ZER1-like_C"/>
</dbReference>
<dbReference type="InterPro" id="IPR051341">
    <property type="entry name" value="Zyg-11_UBL_adapter"/>
</dbReference>
<dbReference type="PANTHER" id="PTHR12904">
    <property type="match status" value="1"/>
</dbReference>
<dbReference type="PANTHER" id="PTHR12904:SF23">
    <property type="entry name" value="PROTEIN ZER-1 HOMOLOG"/>
    <property type="match status" value="1"/>
</dbReference>
<dbReference type="Pfam" id="PF25013">
    <property type="entry name" value="LRR_Zer-1"/>
    <property type="match status" value="1"/>
</dbReference>
<dbReference type="Pfam" id="PF22964">
    <property type="entry name" value="ZER1-like_2nd"/>
    <property type="match status" value="1"/>
</dbReference>
<dbReference type="SUPFAM" id="SSF48371">
    <property type="entry name" value="ARM repeat"/>
    <property type="match status" value="1"/>
</dbReference>
<dbReference type="SUPFAM" id="SSF52047">
    <property type="entry name" value="RNI-like"/>
    <property type="match status" value="1"/>
</dbReference>